<name>ASO_CUCMA</name>
<reference key="1">
    <citation type="journal article" date="1990" name="Eur. J. Biochem.">
        <title>Molecular cloning and nucleotide sequence of full-length cDNA for ascorbate oxidase from cultured pumpkin cells.</title>
        <authorList>
            <person name="Esaka M."/>
            <person name="Hattori T."/>
            <person name="Fujisawa K."/>
            <person name="Sakajo S."/>
            <person name="Asahi T."/>
        </authorList>
    </citation>
    <scope>NUCLEOTIDE SEQUENCE [MRNA]</scope>
    <scope>PROTEIN SEQUENCE OF 31-48</scope>
    <source>
        <strain>cv. Ebisu Nankin</strain>
    </source>
</reference>
<reference key="2">
    <citation type="journal article" date="1997" name="Plant Cell Physiol.">
        <title>Cloning of the pumpkin ascorbate oxidase gene and analysis of a cis-acting region involved in induction by auxin.</title>
        <authorList>
            <person name="Kisu Y."/>
            <person name="Harada Y."/>
            <person name="Goto M."/>
            <person name="Esaka M."/>
        </authorList>
    </citation>
    <scope>NUCLEOTIDE SEQUENCE [GENOMIC DNA]</scope>
</reference>
<accession>P24792</accession>
<accession>Q39539</accession>
<keyword id="KW-0186">Copper</keyword>
<keyword id="KW-0903">Direct protein sequencing</keyword>
<keyword id="KW-1015">Disulfide bond</keyword>
<keyword id="KW-0325">Glycoprotein</keyword>
<keyword id="KW-0479">Metal-binding</keyword>
<keyword id="KW-0560">Oxidoreductase</keyword>
<keyword id="KW-1185">Reference proteome</keyword>
<keyword id="KW-0677">Repeat</keyword>
<keyword id="KW-0964">Secreted</keyword>
<keyword id="KW-0732">Signal</keyword>
<dbReference type="EC" id="1.10.3.3"/>
<dbReference type="EMBL" id="X55779">
    <property type="protein sequence ID" value="CAA39300.1"/>
    <property type="molecule type" value="mRNA"/>
</dbReference>
<dbReference type="EMBL" id="D55677">
    <property type="protein sequence ID" value="BAA09528.1"/>
    <property type="molecule type" value="Genomic_DNA"/>
</dbReference>
<dbReference type="PIR" id="S11027">
    <property type="entry name" value="S11027"/>
</dbReference>
<dbReference type="SMR" id="P24792"/>
<dbReference type="GlyCosmos" id="P24792">
    <property type="glycosylation" value="3 sites, No reported glycans"/>
</dbReference>
<dbReference type="OrthoDB" id="2121828at2759"/>
<dbReference type="Proteomes" id="UP000504608">
    <property type="component" value="Unplaced"/>
</dbReference>
<dbReference type="GO" id="GO:0005576">
    <property type="term" value="C:extracellular region"/>
    <property type="evidence" value="ECO:0007669"/>
    <property type="project" value="UniProtKB-SubCell"/>
</dbReference>
<dbReference type="GO" id="GO:0009506">
    <property type="term" value="C:plasmodesma"/>
    <property type="evidence" value="ECO:0007669"/>
    <property type="project" value="TreeGrafter"/>
</dbReference>
<dbReference type="GO" id="GO:0005507">
    <property type="term" value="F:copper ion binding"/>
    <property type="evidence" value="ECO:0007669"/>
    <property type="project" value="InterPro"/>
</dbReference>
<dbReference type="GO" id="GO:0008447">
    <property type="term" value="F:L-ascorbate oxidase activity"/>
    <property type="evidence" value="ECO:0007669"/>
    <property type="project" value="UniProtKB-EC"/>
</dbReference>
<dbReference type="CDD" id="cd13845">
    <property type="entry name" value="CuRO_1_AAO"/>
    <property type="match status" value="1"/>
</dbReference>
<dbReference type="CDD" id="cd13893">
    <property type="entry name" value="CuRO_3_AAO"/>
    <property type="match status" value="1"/>
</dbReference>
<dbReference type="FunFam" id="2.60.40.420:FF:000058">
    <property type="entry name" value="L-ascorbate oxidase"/>
    <property type="match status" value="1"/>
</dbReference>
<dbReference type="FunFam" id="2.60.40.420:FF:000059">
    <property type="entry name" value="L-ascorbate oxidase"/>
    <property type="match status" value="1"/>
</dbReference>
<dbReference type="FunFam" id="2.60.40.420:FF:000060">
    <property type="entry name" value="L-ascorbate oxidase"/>
    <property type="match status" value="1"/>
</dbReference>
<dbReference type="Gene3D" id="2.60.40.420">
    <property type="entry name" value="Cupredoxins - blue copper proteins"/>
    <property type="match status" value="3"/>
</dbReference>
<dbReference type="InterPro" id="IPR011707">
    <property type="entry name" value="Cu-oxidase-like_N"/>
</dbReference>
<dbReference type="InterPro" id="IPR001117">
    <property type="entry name" value="Cu-oxidase_2nd"/>
</dbReference>
<dbReference type="InterPro" id="IPR011706">
    <property type="entry name" value="Cu-oxidase_C"/>
</dbReference>
<dbReference type="InterPro" id="IPR045087">
    <property type="entry name" value="Cu-oxidase_fam"/>
</dbReference>
<dbReference type="InterPro" id="IPR033138">
    <property type="entry name" value="Cu_oxidase_CS"/>
</dbReference>
<dbReference type="InterPro" id="IPR002355">
    <property type="entry name" value="Cu_oxidase_Cu_BS"/>
</dbReference>
<dbReference type="InterPro" id="IPR008972">
    <property type="entry name" value="Cupredoxin"/>
</dbReference>
<dbReference type="InterPro" id="IPR034259">
    <property type="entry name" value="CuRO_1_AAO"/>
</dbReference>
<dbReference type="InterPro" id="IPR034267">
    <property type="entry name" value="CuRO_3_AAO"/>
</dbReference>
<dbReference type="InterPro" id="IPR017760">
    <property type="entry name" value="L-ascorbate_oxidase_pln"/>
</dbReference>
<dbReference type="NCBIfam" id="TIGR03388">
    <property type="entry name" value="ascorbase"/>
    <property type="match status" value="1"/>
</dbReference>
<dbReference type="PANTHER" id="PTHR11709:SF394">
    <property type="entry name" value="FI03373P-RELATED"/>
    <property type="match status" value="1"/>
</dbReference>
<dbReference type="PANTHER" id="PTHR11709">
    <property type="entry name" value="MULTI-COPPER OXIDASE"/>
    <property type="match status" value="1"/>
</dbReference>
<dbReference type="Pfam" id="PF00394">
    <property type="entry name" value="Cu-oxidase"/>
    <property type="match status" value="1"/>
</dbReference>
<dbReference type="Pfam" id="PF07731">
    <property type="entry name" value="Cu-oxidase_2"/>
    <property type="match status" value="1"/>
</dbReference>
<dbReference type="Pfam" id="PF07732">
    <property type="entry name" value="Cu-oxidase_3"/>
    <property type="match status" value="1"/>
</dbReference>
<dbReference type="SUPFAM" id="SSF49503">
    <property type="entry name" value="Cupredoxins"/>
    <property type="match status" value="3"/>
</dbReference>
<dbReference type="PROSITE" id="PS00079">
    <property type="entry name" value="MULTICOPPER_OXIDASE1"/>
    <property type="match status" value="1"/>
</dbReference>
<dbReference type="PROSITE" id="PS00080">
    <property type="entry name" value="MULTICOPPER_OXIDASE2"/>
    <property type="match status" value="1"/>
</dbReference>
<protein>
    <recommendedName>
        <fullName>L-ascorbate oxidase</fullName>
        <shortName>ASO</shortName>
        <shortName>Ascorbase</shortName>
        <ecNumber>1.10.3.3</ecNumber>
    </recommendedName>
</protein>
<evidence type="ECO:0000250" key="1"/>
<evidence type="ECO:0000255" key="2"/>
<evidence type="ECO:0000269" key="3">
    <source>
    </source>
</evidence>
<evidence type="ECO:0000305" key="4"/>
<proteinExistence type="evidence at protein level"/>
<sequence>MLQMGKAREPNFLILFFFGLILAFGISSEGSQIRHYKWEVEYMFWAPDCNENIVMGINGQFPGPTIRANAGDTVVVELINKLHTEGVVIHWHGILQRGTPWADGTASISQCAINPGETFFYNFTVDNPGTFFYHGHLGMQRSAGLYGSLIVDPPQGKKEPFHYDGEINLLLSDWWHQSIHKQEVGLSSKPIRWIGEPQTILLNGRGQFDCSIAAKYDSNLEPCKLKGSEPCAPYIFHVMPKKTYRIRIASTTALAALNFAIGNHPLLVVEADGNYVQPFYTSDIDIYSGESYSVLITTDQNPSENYWVSVGTRGRHPNTPPGLTLLNYLPNSVSKLPTSPPPETPAWDDFDRSKNFTYRITAAMGSPKPPVKSNRRIFLLNTQNVINGYVKWAINDVSLALPPTPYLGAMKFNLLHAFDQNPPPEVFPEDYDIDTPPTNEKTKIGNGVYQFKIGEIVDVILQNANMMKENLSEIHPWHLHGHDFWVLGYGDGKFTAEEESSLNLKNPPLRNTVVIFPYGWTAIRFVADNPGVWAFHCHIEPHLHMGMGVVFAEGVEKVGRIPTKALACGGTAKSLINNP</sequence>
<organism>
    <name type="scientific">Cucurbita maxima</name>
    <name type="common">Pumpkin</name>
    <name type="synonym">Winter squash</name>
    <dbReference type="NCBI Taxonomy" id="3661"/>
    <lineage>
        <taxon>Eukaryota</taxon>
        <taxon>Viridiplantae</taxon>
        <taxon>Streptophyta</taxon>
        <taxon>Embryophyta</taxon>
        <taxon>Tracheophyta</taxon>
        <taxon>Spermatophyta</taxon>
        <taxon>Magnoliopsida</taxon>
        <taxon>eudicotyledons</taxon>
        <taxon>Gunneridae</taxon>
        <taxon>Pentapetalae</taxon>
        <taxon>rosids</taxon>
        <taxon>fabids</taxon>
        <taxon>Cucurbitales</taxon>
        <taxon>Cucurbitaceae</taxon>
        <taxon>Cucurbiteae</taxon>
        <taxon>Cucurbita</taxon>
    </lineage>
</organism>
<gene>
    <name type="primary">AAO</name>
</gene>
<comment type="function">
    <text>May be involved in a redox system involving ascorbic acid.</text>
</comment>
<comment type="catalytic activity">
    <reaction>
        <text>4 L-ascorbate + O2 = 4 monodehydro-L-ascorbate radical + 2 H2O</text>
        <dbReference type="Rhea" id="RHEA:30243"/>
        <dbReference type="ChEBI" id="CHEBI:15377"/>
        <dbReference type="ChEBI" id="CHEBI:15379"/>
        <dbReference type="ChEBI" id="CHEBI:38290"/>
        <dbReference type="ChEBI" id="CHEBI:59513"/>
        <dbReference type="EC" id="1.10.3.3"/>
    </reaction>
</comment>
<comment type="cofactor">
    <cofactor evidence="1">
        <name>Cu cation</name>
        <dbReference type="ChEBI" id="CHEBI:23378"/>
    </cofactor>
    <text evidence="1">Binds 4 Cu cations per monomer.</text>
</comment>
<comment type="subunit">
    <text evidence="1">Dimer.</text>
</comment>
<comment type="subcellular location">
    <subcellularLocation>
        <location evidence="4">Secreted</location>
    </subcellularLocation>
</comment>
<comment type="similarity">
    <text evidence="4">Belongs to the multicopper oxidase family.</text>
</comment>
<feature type="signal peptide" evidence="3">
    <location>
        <begin position="1"/>
        <end position="30"/>
    </location>
</feature>
<feature type="chain" id="PRO_0000002907" description="L-ascorbate oxidase">
    <location>
        <begin position="31"/>
        <end position="579"/>
    </location>
</feature>
<feature type="domain" description="Plastocyanin-like 1">
    <location>
        <begin position="33"/>
        <end position="152"/>
    </location>
</feature>
<feature type="domain" description="Plastocyanin-like 2">
    <location>
        <begin position="164"/>
        <end position="330"/>
    </location>
</feature>
<feature type="domain" description="Plastocyanin-like 3">
    <location>
        <begin position="374"/>
        <end position="553"/>
    </location>
</feature>
<feature type="binding site" description="type 2 copper site" evidence="1">
    <location>
        <position position="90"/>
    </location>
    <ligand>
        <name>Cu cation</name>
        <dbReference type="ChEBI" id="CHEBI:23378"/>
        <label>1</label>
    </ligand>
</feature>
<feature type="binding site" description="type 3 copper site" evidence="1">
    <location>
        <position position="92"/>
    </location>
    <ligand>
        <name>Cu cation</name>
        <dbReference type="ChEBI" id="CHEBI:23378"/>
        <label>2</label>
    </ligand>
</feature>
<feature type="binding site" description="type 3 copper site" evidence="1">
    <location>
        <position position="134"/>
    </location>
    <ligand>
        <name>Cu cation</name>
        <dbReference type="ChEBI" id="CHEBI:23378"/>
        <label>2</label>
    </ligand>
</feature>
<feature type="binding site" description="type 3 copper site" evidence="1">
    <location>
        <position position="136"/>
    </location>
    <ligand>
        <name>Cu cation</name>
        <dbReference type="ChEBI" id="CHEBI:23378"/>
        <label>3</label>
    </ligand>
</feature>
<feature type="binding site" description="type 1 copper site" evidence="1">
    <location>
        <position position="475"/>
    </location>
    <ligand>
        <name>Cu cation</name>
        <dbReference type="ChEBI" id="CHEBI:23378"/>
        <label>4</label>
    </ligand>
</feature>
<feature type="binding site" description="type 2 copper site" evidence="1">
    <location>
        <position position="478"/>
    </location>
    <ligand>
        <name>Cu cation</name>
        <dbReference type="ChEBI" id="CHEBI:23378"/>
        <label>1</label>
    </ligand>
</feature>
<feature type="binding site" description="type 3 copper site" evidence="1">
    <location>
        <position position="480"/>
    </location>
    <ligand>
        <name>Cu cation</name>
        <dbReference type="ChEBI" id="CHEBI:23378"/>
        <label>3</label>
    </ligand>
</feature>
<feature type="binding site" description="type 3 copper site" evidence="1">
    <location>
        <position position="536"/>
    </location>
    <ligand>
        <name>Cu cation</name>
        <dbReference type="ChEBI" id="CHEBI:23378"/>
        <label>3</label>
    </ligand>
</feature>
<feature type="binding site" description="type 1 copper site" evidence="1">
    <location>
        <position position="537"/>
    </location>
    <ligand>
        <name>Cu cation</name>
        <dbReference type="ChEBI" id="CHEBI:23378"/>
        <label>4</label>
    </ligand>
</feature>
<feature type="binding site" description="type 3 copper site" evidence="1">
    <location>
        <position position="538"/>
    </location>
    <ligand>
        <name>Cu cation</name>
        <dbReference type="ChEBI" id="CHEBI:23378"/>
        <label>2</label>
    </ligand>
</feature>
<feature type="binding site" description="type 1 copper site" evidence="1">
    <location>
        <position position="542"/>
    </location>
    <ligand>
        <name>Cu cation</name>
        <dbReference type="ChEBI" id="CHEBI:23378"/>
        <label>4</label>
    </ligand>
</feature>
<feature type="binding site" description="type 1 copper site" evidence="1">
    <location>
        <position position="547"/>
    </location>
    <ligand>
        <name>Cu cation</name>
        <dbReference type="ChEBI" id="CHEBI:23378"/>
        <label>4</label>
    </ligand>
</feature>
<feature type="glycosylation site" description="N-linked (GlcNAc...) asparagine" evidence="2">
    <location>
        <position position="122"/>
    </location>
</feature>
<feature type="glycosylation site" description="N-linked (GlcNAc...) asparagine" evidence="2">
    <location>
        <position position="355"/>
    </location>
</feature>
<feature type="glycosylation site" description="N-linked (GlcNAc...) asparagine" evidence="2">
    <location>
        <position position="470"/>
    </location>
</feature>
<feature type="disulfide bond" evidence="1">
    <location>
        <begin position="49"/>
        <end position="231"/>
    </location>
</feature>
<feature type="disulfide bond" evidence="1">
    <location>
        <begin position="111"/>
        <end position="568"/>
    </location>
</feature>
<feature type="disulfide bond" evidence="1">
    <location>
        <begin position="210"/>
        <end position="223"/>
    </location>
</feature>
<feature type="sequence conflict" description="In Ref. 1; CAA39300." evidence="4" ref="1">
    <original>W</original>
    <variation>C</variation>
    <location>
        <position position="175"/>
    </location>
</feature>